<keyword id="KW-0878">Amphibian defense peptide</keyword>
<keyword id="KW-0044">Antibiotic</keyword>
<keyword id="KW-0929">Antimicrobial</keyword>
<keyword id="KW-0165">Cleavage on pair of basic residues</keyword>
<keyword id="KW-0903">Direct protein sequencing</keyword>
<keyword id="KW-0964">Secreted</keyword>
<keyword id="KW-0732">Signal</keyword>
<organism evidence="7">
    <name type="scientific">Agalychnis callidryas</name>
    <name type="common">Red-eyed tree frog</name>
    <name type="synonym">Phyllomedusa callidryas</name>
    <dbReference type="NCBI Taxonomy" id="197464"/>
    <lineage>
        <taxon>Eukaryota</taxon>
        <taxon>Metazoa</taxon>
        <taxon>Chordata</taxon>
        <taxon>Craniata</taxon>
        <taxon>Vertebrata</taxon>
        <taxon>Euteleostomi</taxon>
        <taxon>Amphibia</taxon>
        <taxon>Batrachia</taxon>
        <taxon>Anura</taxon>
        <taxon>Neobatrachia</taxon>
        <taxon>Hyloidea</taxon>
        <taxon>Hylidae</taxon>
        <taxon>Phyllomedusinae</taxon>
        <taxon>Agalychnis</taxon>
    </lineage>
</organism>
<evidence type="ECO:0000255" key="1"/>
<evidence type="ECO:0000256" key="2">
    <source>
        <dbReference type="SAM" id="MobiDB-lite"/>
    </source>
</evidence>
<evidence type="ECO:0000269" key="3">
    <source>
    </source>
</evidence>
<evidence type="ECO:0000303" key="4">
    <source>
    </source>
</evidence>
<evidence type="ECO:0000305" key="5"/>
<evidence type="ECO:0000305" key="6">
    <source>
    </source>
</evidence>
<evidence type="ECO:0000312" key="7">
    <source>
        <dbReference type="EMBL" id="CAQ16440.1"/>
    </source>
</evidence>
<accession>B6HY14</accession>
<proteinExistence type="evidence at protein level"/>
<protein>
    <recommendedName>
        <fullName evidence="4">Caerin-regulated peptide</fullName>
    </recommendedName>
    <alternativeName>
        <fullName evidence="7">CRP-AC1</fullName>
    </alternativeName>
</protein>
<reference evidence="7" key="1">
    <citation type="journal article" date="2008" name="Biochimie">
        <title>Novel dermaseptin, adenoregulin and caerin homologs from the Central American red-eyed leaf frog, Agalychnis callidryas, revealed by functional peptidomics of defensive skin secretion.</title>
        <authorList>
            <person name="Wang L."/>
            <person name="Zhou M."/>
            <person name="McClelland A."/>
            <person name="Reilly A."/>
            <person name="Chen T."/>
            <person name="Gagliardo R."/>
            <person name="Walker B."/>
            <person name="Shaw C."/>
        </authorList>
    </citation>
    <scope>NUCLEOTIDE SEQUENCE [MRNA]</scope>
    <scope>PROTEIN SEQUENCE OF 46-72</scope>
    <scope>FUNCTION</scope>
    <scope>SUBCELLULAR LOCATION</scope>
    <scope>MASS SPECTROMETRY</scope>
    <source>
        <tissue evidence="4">Skin secretion</tissue>
    </source>
</reference>
<sequence>MAFLKKSLLLVLFLGLVSLSICDEEKRENEDEEEQEDDEQSEEKRGMWGTVFKGIKTVAKHLLPHVFSSQQS</sequence>
<feature type="signal peptide" evidence="1">
    <location>
        <begin position="1"/>
        <end position="22"/>
    </location>
</feature>
<feature type="propeptide" id="PRO_0000442279" evidence="6">
    <location>
        <begin position="23"/>
        <end position="43"/>
    </location>
</feature>
<feature type="peptide" id="PRO_0000442280" description="Caerin-regulated peptide" evidence="3">
    <location>
        <begin position="46"/>
        <end position="72"/>
    </location>
</feature>
<feature type="region of interest" description="Disordered" evidence="2">
    <location>
        <begin position="24"/>
        <end position="46"/>
    </location>
</feature>
<feature type="compositionally biased region" description="Acidic residues" evidence="2">
    <location>
        <begin position="30"/>
        <end position="41"/>
    </location>
</feature>
<name>DRU_AGACL</name>
<dbReference type="EMBL" id="AM944840">
    <property type="protein sequence ID" value="CAQ16440.1"/>
    <property type="molecule type" value="mRNA"/>
</dbReference>
<dbReference type="GO" id="GO:0005576">
    <property type="term" value="C:extracellular region"/>
    <property type="evidence" value="ECO:0007669"/>
    <property type="project" value="UniProtKB-SubCell"/>
</dbReference>
<dbReference type="GO" id="GO:0042742">
    <property type="term" value="P:defense response to bacterium"/>
    <property type="evidence" value="ECO:0007669"/>
    <property type="project" value="UniProtKB-KW"/>
</dbReference>
<dbReference type="InterPro" id="IPR004275">
    <property type="entry name" value="Frog_antimicrobial_propeptide"/>
</dbReference>
<dbReference type="InterPro" id="IPR016322">
    <property type="entry name" value="FSAP"/>
</dbReference>
<dbReference type="Pfam" id="PF03032">
    <property type="entry name" value="FSAP_sig_propep"/>
    <property type="match status" value="1"/>
</dbReference>
<dbReference type="PIRSF" id="PIRSF001822">
    <property type="entry name" value="Dermaseptin_precursor"/>
    <property type="match status" value="1"/>
</dbReference>
<comment type="function">
    <text evidence="3">Has antibacterial activity against Gram-positive bacterium M.luteus NCT C2665 and against Gram-negative bacterium E.coli K12D31.</text>
</comment>
<comment type="subcellular location">
    <subcellularLocation>
        <location evidence="1 3">Secreted</location>
    </subcellularLocation>
</comment>
<comment type="tissue specificity">
    <text evidence="6">Expressed by the skin glands.</text>
</comment>
<comment type="mass spectrometry"/>
<comment type="similarity">
    <text evidence="5">Belongs to the frog skin active peptide (FSAP) family.</text>
</comment>